<reference key="1">
    <citation type="journal article" date="2008" name="J. Bacteriol.">
        <title>Genome sequence of the streptomycin-producing microorganism Streptomyces griseus IFO 13350.</title>
        <authorList>
            <person name="Ohnishi Y."/>
            <person name="Ishikawa J."/>
            <person name="Hara H."/>
            <person name="Suzuki H."/>
            <person name="Ikenoya M."/>
            <person name="Ikeda H."/>
            <person name="Yamashita A."/>
            <person name="Hattori M."/>
            <person name="Horinouchi S."/>
        </authorList>
    </citation>
    <scope>NUCLEOTIDE SEQUENCE [LARGE SCALE GENOMIC DNA]</scope>
    <source>
        <strain>JCM 4626 / CBS 651.72 / NBRC 13350 / KCC S-0626 / ISP 5235</strain>
    </source>
</reference>
<reference key="2">
    <citation type="journal article" date="2013" name="Mol. Microbiol.">
        <title>An alternative sigma factor governs the principal sigma factor in Streptomyces griseus.</title>
        <authorList>
            <person name="Otani H."/>
            <person name="Higo A."/>
            <person name="Nanamiya H."/>
            <person name="Horinouchi S."/>
            <person name="Ohnishi Y."/>
        </authorList>
    </citation>
    <scope>FUNCTION</scope>
    <scope>DNA-BINDING</scope>
    <scope>INDUCTION</scope>
    <scope>DISRUPTION PHENOTYPE</scope>
    <source>
        <strain>JCM 4626 / CBS 651.72 / NBRC 13350 / KCC S-0626 / ISP 5235</strain>
    </source>
</reference>
<gene>
    <name evidence="5" type="primary">shbA</name>
    <name evidence="7" type="ordered locus">SGR_2758</name>
</gene>
<evidence type="ECO:0000250" key="1">
    <source>
        <dbReference type="UniProtKB" id="Q9EZJ8"/>
    </source>
</evidence>
<evidence type="ECO:0000255" key="2"/>
<evidence type="ECO:0000256" key="3">
    <source>
        <dbReference type="SAM" id="MobiDB-lite"/>
    </source>
</evidence>
<evidence type="ECO:0000269" key="4">
    <source>
    </source>
</evidence>
<evidence type="ECO:0000303" key="5">
    <source>
    </source>
</evidence>
<evidence type="ECO:0000305" key="6"/>
<evidence type="ECO:0000312" key="7">
    <source>
        <dbReference type="EMBL" id="BAG19587.1"/>
    </source>
</evidence>
<feature type="chain" id="PRO_0000442939" description="ECF RNA polymerase sigma factor ShbA">
    <location>
        <begin position="1"/>
        <end position="191"/>
    </location>
</feature>
<feature type="DNA-binding region" description="H-T-H motif" evidence="1">
    <location>
        <begin position="160"/>
        <end position="179"/>
    </location>
</feature>
<feature type="region of interest" description="Sigma-70 factor domain-2" evidence="2">
    <location>
        <begin position="27"/>
        <end position="98"/>
    </location>
</feature>
<feature type="region of interest" description="Disordered" evidence="3">
    <location>
        <begin position="100"/>
        <end position="122"/>
    </location>
</feature>
<feature type="region of interest" description="Sigma-70 factor domain-4" evidence="2">
    <location>
        <begin position="138"/>
        <end position="187"/>
    </location>
</feature>
<feature type="compositionally biased region" description="Basic and acidic residues" evidence="3">
    <location>
        <begin position="112"/>
        <end position="122"/>
    </location>
</feature>
<sequence>MRDDETTVIGALVHRAVEGDAQATHDLLAHVHPLALRYCRSRLNRLPGDARHFVEDLAQEVCVAVLMALPRYKDTGRPFEAFVFAIAGHKVADLQRAAMRHPGSTAVPSDEMPERPDDSLGPEERALLSSDAAWAKKLLANLPENQRELLVLRVAVGLTAEETGQMLGMSPGAVRVAQHRALSRLRALAEQ</sequence>
<proteinExistence type="evidence at protein level"/>
<dbReference type="EMBL" id="AP009493">
    <property type="protein sequence ID" value="BAG19587.1"/>
    <property type="molecule type" value="Genomic_DNA"/>
</dbReference>
<dbReference type="RefSeq" id="WP_003966888.1">
    <property type="nucleotide sequence ID" value="NC_010572.1"/>
</dbReference>
<dbReference type="SMR" id="B1W3T1"/>
<dbReference type="KEGG" id="sgr:SGR_2758"/>
<dbReference type="PATRIC" id="fig|455632.4.peg.2820"/>
<dbReference type="eggNOG" id="COG1595">
    <property type="taxonomic scope" value="Bacteria"/>
</dbReference>
<dbReference type="HOGENOM" id="CLU_047691_10_1_11"/>
<dbReference type="Proteomes" id="UP000001685">
    <property type="component" value="Chromosome"/>
</dbReference>
<dbReference type="GO" id="GO:0003677">
    <property type="term" value="F:DNA binding"/>
    <property type="evidence" value="ECO:0007669"/>
    <property type="project" value="UniProtKB-KW"/>
</dbReference>
<dbReference type="GO" id="GO:0016987">
    <property type="term" value="F:sigma factor activity"/>
    <property type="evidence" value="ECO:0007669"/>
    <property type="project" value="UniProtKB-KW"/>
</dbReference>
<dbReference type="GO" id="GO:0006352">
    <property type="term" value="P:DNA-templated transcription initiation"/>
    <property type="evidence" value="ECO:0007669"/>
    <property type="project" value="InterPro"/>
</dbReference>
<dbReference type="CDD" id="cd06171">
    <property type="entry name" value="Sigma70_r4"/>
    <property type="match status" value="1"/>
</dbReference>
<dbReference type="Gene3D" id="1.10.1740.10">
    <property type="match status" value="1"/>
</dbReference>
<dbReference type="Gene3D" id="1.10.10.10">
    <property type="entry name" value="Winged helix-like DNA-binding domain superfamily/Winged helix DNA-binding domain"/>
    <property type="match status" value="1"/>
</dbReference>
<dbReference type="InterPro" id="IPR039425">
    <property type="entry name" value="RNA_pol_sigma-70-like"/>
</dbReference>
<dbReference type="InterPro" id="IPR014284">
    <property type="entry name" value="RNA_pol_sigma-70_dom"/>
</dbReference>
<dbReference type="InterPro" id="IPR000943">
    <property type="entry name" value="RNA_pol_sigma70"/>
</dbReference>
<dbReference type="InterPro" id="IPR007627">
    <property type="entry name" value="RNA_pol_sigma70_r2"/>
</dbReference>
<dbReference type="InterPro" id="IPR007630">
    <property type="entry name" value="RNA_pol_sigma70_r4"/>
</dbReference>
<dbReference type="InterPro" id="IPR013325">
    <property type="entry name" value="RNA_pol_sigma_r2"/>
</dbReference>
<dbReference type="InterPro" id="IPR013324">
    <property type="entry name" value="RNA_pol_sigma_r3/r4-like"/>
</dbReference>
<dbReference type="InterPro" id="IPR036388">
    <property type="entry name" value="WH-like_DNA-bd_sf"/>
</dbReference>
<dbReference type="NCBIfam" id="NF007230">
    <property type="entry name" value="PRK09648.1"/>
    <property type="match status" value="1"/>
</dbReference>
<dbReference type="NCBIfam" id="TIGR02937">
    <property type="entry name" value="sigma70-ECF"/>
    <property type="match status" value="1"/>
</dbReference>
<dbReference type="PANTHER" id="PTHR43133:SF58">
    <property type="entry name" value="ECF RNA POLYMERASE SIGMA FACTOR SIGD"/>
    <property type="match status" value="1"/>
</dbReference>
<dbReference type="PANTHER" id="PTHR43133">
    <property type="entry name" value="RNA POLYMERASE ECF-TYPE SIGMA FACTO"/>
    <property type="match status" value="1"/>
</dbReference>
<dbReference type="Pfam" id="PF04542">
    <property type="entry name" value="Sigma70_r2"/>
    <property type="match status" value="1"/>
</dbReference>
<dbReference type="Pfam" id="PF04545">
    <property type="entry name" value="Sigma70_r4"/>
    <property type="match status" value="1"/>
</dbReference>
<dbReference type="PRINTS" id="PR00046">
    <property type="entry name" value="SIGMA70FCT"/>
</dbReference>
<dbReference type="SUPFAM" id="SSF88946">
    <property type="entry name" value="Sigma2 domain of RNA polymerase sigma factors"/>
    <property type="match status" value="1"/>
</dbReference>
<dbReference type="SUPFAM" id="SSF88659">
    <property type="entry name" value="Sigma3 and sigma4 domains of RNA polymerase sigma factors"/>
    <property type="match status" value="1"/>
</dbReference>
<comment type="function">
    <text evidence="4 6">Sigma factors are initiation factors that promote the attachment of RNA polymerase to specific initiation sites and are then released. Extracytoplasmic function (ECF) sigma factors are held in an inactive form by an anti-sigma factor until released (Probable). This alternative sigma factor governs the transcription of the principal sigma factor HrdB (SigA) throughout growth. Acts by binding to the promoter region (PubMed:23347076).</text>
</comment>
<comment type="induction">
    <text evidence="4">Expression is enhanced during the late growth stage.</text>
</comment>
<comment type="domain">
    <text evidence="1">The sigma-70 factor domain-2 mediates sequence-specific interaction with the -10 element in promoter DNA, and plays an important role in melting the double-stranded DNA and the formation of the transcription bubble. The sigma-70 factor domain-2 mediates interaction with the RNA polymerase subunits RpoB and RpoC.</text>
</comment>
<comment type="domain">
    <text evidence="1">The sigma-70 factor domain-4 contains a helix-turn-helix (H-T-H) motif that mediates interaction with the -35 element in promoter DNA. The domain also mediates interaction with the RNA polymerase subunit RpoA. Interactions between sigma-70 factor domain-4 and anti-sigma factors prevents interaction of sigma factors with the RNA polymerase catalytic core.</text>
</comment>
<comment type="disruption phenotype">
    <text evidence="4">Deletion mutant shows a severe growth defect. Transcription of many genes, including hrdB (sigA), are down-regulated in the mutant strain.</text>
</comment>
<comment type="similarity">
    <text evidence="6">Belongs to the sigma-70 factor family. ECF subfamily.</text>
</comment>
<organism>
    <name type="scientific">Streptomyces griseus subsp. griseus (strain JCM 4626 / CBS 651.72 / NBRC 13350 / KCC S-0626 / ISP 5235)</name>
    <dbReference type="NCBI Taxonomy" id="455632"/>
    <lineage>
        <taxon>Bacteria</taxon>
        <taxon>Bacillati</taxon>
        <taxon>Actinomycetota</taxon>
        <taxon>Actinomycetes</taxon>
        <taxon>Kitasatosporales</taxon>
        <taxon>Streptomycetaceae</taxon>
        <taxon>Streptomyces</taxon>
    </lineage>
</organism>
<protein>
    <recommendedName>
        <fullName evidence="6">ECF RNA polymerase sigma factor ShbA</fullName>
    </recommendedName>
    <alternativeName>
        <fullName evidence="5">Sigma factor for hrdB</fullName>
    </alternativeName>
</protein>
<accession>B1W3T1</accession>
<name>SHBA_STRGG</name>
<keyword id="KW-0238">DNA-binding</keyword>
<keyword id="KW-0731">Sigma factor</keyword>
<keyword id="KW-0804">Transcription</keyword>
<keyword id="KW-0805">Transcription regulation</keyword>